<protein>
    <recommendedName>
        <fullName evidence="1">Large ribosomal subunit protein bL32</fullName>
    </recommendedName>
    <alternativeName>
        <fullName evidence="3">50S ribosomal protein L32</fullName>
    </alternativeName>
</protein>
<accession>B5ZU94</accession>
<proteinExistence type="inferred from homology"/>
<sequence length="61" mass="6906">MAVPKRKTSPSKRGMRRSADALKAPTYVEDKNSGELRRPHHIDLKTGMYRGRQVLTPKESA</sequence>
<name>RL32_RHILW</name>
<organism>
    <name type="scientific">Rhizobium leguminosarum bv. trifolii (strain WSM2304)</name>
    <dbReference type="NCBI Taxonomy" id="395492"/>
    <lineage>
        <taxon>Bacteria</taxon>
        <taxon>Pseudomonadati</taxon>
        <taxon>Pseudomonadota</taxon>
        <taxon>Alphaproteobacteria</taxon>
        <taxon>Hyphomicrobiales</taxon>
        <taxon>Rhizobiaceae</taxon>
        <taxon>Rhizobium/Agrobacterium group</taxon>
        <taxon>Rhizobium</taxon>
    </lineage>
</organism>
<comment type="similarity">
    <text evidence="1">Belongs to the bacterial ribosomal protein bL32 family.</text>
</comment>
<evidence type="ECO:0000255" key="1">
    <source>
        <dbReference type="HAMAP-Rule" id="MF_00340"/>
    </source>
</evidence>
<evidence type="ECO:0000256" key="2">
    <source>
        <dbReference type="SAM" id="MobiDB-lite"/>
    </source>
</evidence>
<evidence type="ECO:0000305" key="3"/>
<keyword id="KW-1185">Reference proteome</keyword>
<keyword id="KW-0687">Ribonucleoprotein</keyword>
<keyword id="KW-0689">Ribosomal protein</keyword>
<reference key="1">
    <citation type="journal article" date="2010" name="Stand. Genomic Sci.">
        <title>Complete genome sequence of Rhizobium leguminosarum bv trifolii strain WSM2304, an effective microsymbiont of the South American clover Trifolium polymorphum.</title>
        <authorList>
            <person name="Reeve W."/>
            <person name="O'Hara G."/>
            <person name="Chain P."/>
            <person name="Ardley J."/>
            <person name="Brau L."/>
            <person name="Nandesena K."/>
            <person name="Tiwari R."/>
            <person name="Malfatti S."/>
            <person name="Kiss H."/>
            <person name="Lapidus A."/>
            <person name="Copeland A."/>
            <person name="Nolan M."/>
            <person name="Land M."/>
            <person name="Ivanova N."/>
            <person name="Mavromatis K."/>
            <person name="Markowitz V."/>
            <person name="Kyrpides N."/>
            <person name="Melino V."/>
            <person name="Denton M."/>
            <person name="Yates R."/>
            <person name="Howieson J."/>
        </authorList>
    </citation>
    <scope>NUCLEOTIDE SEQUENCE [LARGE SCALE GENOMIC DNA]</scope>
    <source>
        <strain>WSM2304</strain>
    </source>
</reference>
<dbReference type="EMBL" id="CP001191">
    <property type="protein sequence ID" value="ACI57087.1"/>
    <property type="molecule type" value="Genomic_DNA"/>
</dbReference>
<dbReference type="RefSeq" id="WP_003543812.1">
    <property type="nucleotide sequence ID" value="NC_011369.1"/>
</dbReference>
<dbReference type="SMR" id="B5ZU94"/>
<dbReference type="STRING" id="395492.Rleg2_3825"/>
<dbReference type="GeneID" id="91150674"/>
<dbReference type="KEGG" id="rlt:Rleg2_3825"/>
<dbReference type="eggNOG" id="COG0333">
    <property type="taxonomic scope" value="Bacteria"/>
</dbReference>
<dbReference type="HOGENOM" id="CLU_129084_2_2_5"/>
<dbReference type="Proteomes" id="UP000008330">
    <property type="component" value="Chromosome"/>
</dbReference>
<dbReference type="GO" id="GO:0015934">
    <property type="term" value="C:large ribosomal subunit"/>
    <property type="evidence" value="ECO:0007669"/>
    <property type="project" value="InterPro"/>
</dbReference>
<dbReference type="GO" id="GO:0003735">
    <property type="term" value="F:structural constituent of ribosome"/>
    <property type="evidence" value="ECO:0007669"/>
    <property type="project" value="InterPro"/>
</dbReference>
<dbReference type="GO" id="GO:0006412">
    <property type="term" value="P:translation"/>
    <property type="evidence" value="ECO:0007669"/>
    <property type="project" value="UniProtKB-UniRule"/>
</dbReference>
<dbReference type="Gene3D" id="1.20.5.640">
    <property type="entry name" value="Single helix bin"/>
    <property type="match status" value="1"/>
</dbReference>
<dbReference type="HAMAP" id="MF_00340">
    <property type="entry name" value="Ribosomal_bL32"/>
    <property type="match status" value="1"/>
</dbReference>
<dbReference type="InterPro" id="IPR002677">
    <property type="entry name" value="Ribosomal_bL32"/>
</dbReference>
<dbReference type="InterPro" id="IPR044957">
    <property type="entry name" value="Ribosomal_bL32_bact"/>
</dbReference>
<dbReference type="InterPro" id="IPR011332">
    <property type="entry name" value="Ribosomal_zn-bd"/>
</dbReference>
<dbReference type="NCBIfam" id="TIGR01031">
    <property type="entry name" value="rpmF_bact"/>
    <property type="match status" value="1"/>
</dbReference>
<dbReference type="PANTHER" id="PTHR35534">
    <property type="entry name" value="50S RIBOSOMAL PROTEIN L32"/>
    <property type="match status" value="1"/>
</dbReference>
<dbReference type="PANTHER" id="PTHR35534:SF1">
    <property type="entry name" value="LARGE RIBOSOMAL SUBUNIT PROTEIN BL32"/>
    <property type="match status" value="1"/>
</dbReference>
<dbReference type="Pfam" id="PF01783">
    <property type="entry name" value="Ribosomal_L32p"/>
    <property type="match status" value="1"/>
</dbReference>
<dbReference type="SUPFAM" id="SSF57829">
    <property type="entry name" value="Zn-binding ribosomal proteins"/>
    <property type="match status" value="1"/>
</dbReference>
<gene>
    <name evidence="1" type="primary">rpmF</name>
    <name type="ordered locus">Rleg2_3825</name>
</gene>
<feature type="chain" id="PRO_1000120165" description="Large ribosomal subunit protein bL32">
    <location>
        <begin position="1"/>
        <end position="61"/>
    </location>
</feature>
<feature type="region of interest" description="Disordered" evidence="2">
    <location>
        <begin position="1"/>
        <end position="61"/>
    </location>
</feature>
<feature type="compositionally biased region" description="Basic residues" evidence="2">
    <location>
        <begin position="1"/>
        <end position="16"/>
    </location>
</feature>
<feature type="compositionally biased region" description="Basic and acidic residues" evidence="2">
    <location>
        <begin position="28"/>
        <end position="44"/>
    </location>
</feature>